<accession>Q3SSY1</accession>
<gene>
    <name evidence="1" type="primary">rplL</name>
    <name type="ordered locus">Nwi_1349</name>
</gene>
<reference key="1">
    <citation type="journal article" date="2006" name="Appl. Environ. Microbiol.">
        <title>Genome sequence of the chemolithoautotrophic nitrite-oxidizing bacterium Nitrobacter winogradskyi Nb-255.</title>
        <authorList>
            <person name="Starkenburg S.R."/>
            <person name="Chain P.S.G."/>
            <person name="Sayavedra-Soto L.A."/>
            <person name="Hauser L."/>
            <person name="Land M.L."/>
            <person name="Larimer F.W."/>
            <person name="Malfatti S.A."/>
            <person name="Klotz M.G."/>
            <person name="Bottomley P.J."/>
            <person name="Arp D.J."/>
            <person name="Hickey W.J."/>
        </authorList>
    </citation>
    <scope>NUCLEOTIDE SEQUENCE [LARGE SCALE GENOMIC DNA]</scope>
    <source>
        <strain>ATCC 25391 / DSM 10237 / CIP 104748 / NCIMB 11846 / Nb-255</strain>
    </source>
</reference>
<proteinExistence type="inferred from homology"/>
<sequence>MADLQKIVDDLSALTVLEAAELAKLLEEKWGVSAAAAVAVAAAPGAGGGAPAAEEKTEFTVVLAAAGDKKIEVIKEVRAITGLGLKEAKDLVEGAPKPVKEGVAKDEAEKIKAQLEKAGGKVELK</sequence>
<name>RL7_NITWN</name>
<dbReference type="EMBL" id="CP000115">
    <property type="protein sequence ID" value="ABA04610.1"/>
    <property type="molecule type" value="Genomic_DNA"/>
</dbReference>
<dbReference type="RefSeq" id="WP_011314628.1">
    <property type="nucleotide sequence ID" value="NC_007406.1"/>
</dbReference>
<dbReference type="SMR" id="Q3SSY1"/>
<dbReference type="STRING" id="323098.Nwi_1349"/>
<dbReference type="KEGG" id="nwi:Nwi_1349"/>
<dbReference type="eggNOG" id="COG0222">
    <property type="taxonomic scope" value="Bacteria"/>
</dbReference>
<dbReference type="HOGENOM" id="CLU_086499_3_0_5"/>
<dbReference type="OrthoDB" id="9811748at2"/>
<dbReference type="Proteomes" id="UP000002531">
    <property type="component" value="Chromosome"/>
</dbReference>
<dbReference type="GO" id="GO:0022625">
    <property type="term" value="C:cytosolic large ribosomal subunit"/>
    <property type="evidence" value="ECO:0007669"/>
    <property type="project" value="TreeGrafter"/>
</dbReference>
<dbReference type="GO" id="GO:0003729">
    <property type="term" value="F:mRNA binding"/>
    <property type="evidence" value="ECO:0007669"/>
    <property type="project" value="TreeGrafter"/>
</dbReference>
<dbReference type="GO" id="GO:0003735">
    <property type="term" value="F:structural constituent of ribosome"/>
    <property type="evidence" value="ECO:0007669"/>
    <property type="project" value="InterPro"/>
</dbReference>
<dbReference type="GO" id="GO:0006412">
    <property type="term" value="P:translation"/>
    <property type="evidence" value="ECO:0007669"/>
    <property type="project" value="UniProtKB-UniRule"/>
</dbReference>
<dbReference type="CDD" id="cd00387">
    <property type="entry name" value="Ribosomal_L7_L12"/>
    <property type="match status" value="1"/>
</dbReference>
<dbReference type="FunFam" id="1.20.5.710:FF:000007">
    <property type="entry name" value="50S ribosomal protein L7/L12"/>
    <property type="match status" value="1"/>
</dbReference>
<dbReference type="FunFam" id="3.30.1390.10:FF:000001">
    <property type="entry name" value="50S ribosomal protein L7/L12"/>
    <property type="match status" value="1"/>
</dbReference>
<dbReference type="Gene3D" id="3.30.1390.10">
    <property type="match status" value="1"/>
</dbReference>
<dbReference type="Gene3D" id="1.20.5.710">
    <property type="entry name" value="Single helix bin"/>
    <property type="match status" value="1"/>
</dbReference>
<dbReference type="HAMAP" id="MF_00368">
    <property type="entry name" value="Ribosomal_bL12"/>
    <property type="match status" value="1"/>
</dbReference>
<dbReference type="InterPro" id="IPR000206">
    <property type="entry name" value="Ribosomal_bL12"/>
</dbReference>
<dbReference type="InterPro" id="IPR013823">
    <property type="entry name" value="Ribosomal_bL12_C"/>
</dbReference>
<dbReference type="InterPro" id="IPR014719">
    <property type="entry name" value="Ribosomal_bL12_C/ClpS-like"/>
</dbReference>
<dbReference type="InterPro" id="IPR008932">
    <property type="entry name" value="Ribosomal_bL12_oligo"/>
</dbReference>
<dbReference type="InterPro" id="IPR036235">
    <property type="entry name" value="Ribosomal_bL12_oligo_N_sf"/>
</dbReference>
<dbReference type="NCBIfam" id="TIGR00855">
    <property type="entry name" value="L12"/>
    <property type="match status" value="1"/>
</dbReference>
<dbReference type="PANTHER" id="PTHR45987">
    <property type="entry name" value="39S RIBOSOMAL PROTEIN L12"/>
    <property type="match status" value="1"/>
</dbReference>
<dbReference type="PANTHER" id="PTHR45987:SF4">
    <property type="entry name" value="LARGE RIBOSOMAL SUBUNIT PROTEIN BL12M"/>
    <property type="match status" value="1"/>
</dbReference>
<dbReference type="Pfam" id="PF00542">
    <property type="entry name" value="Ribosomal_L12"/>
    <property type="match status" value="1"/>
</dbReference>
<dbReference type="Pfam" id="PF16320">
    <property type="entry name" value="Ribosomal_L12_N"/>
    <property type="match status" value="1"/>
</dbReference>
<dbReference type="SUPFAM" id="SSF54736">
    <property type="entry name" value="ClpS-like"/>
    <property type="match status" value="1"/>
</dbReference>
<dbReference type="SUPFAM" id="SSF48300">
    <property type="entry name" value="Ribosomal protein L7/12, oligomerisation (N-terminal) domain"/>
    <property type="match status" value="1"/>
</dbReference>
<evidence type="ECO:0000255" key="1">
    <source>
        <dbReference type="HAMAP-Rule" id="MF_00368"/>
    </source>
</evidence>
<evidence type="ECO:0000305" key="2"/>
<comment type="function">
    <text evidence="1">Forms part of the ribosomal stalk which helps the ribosome interact with GTP-bound translation factors. Is thus essential for accurate translation.</text>
</comment>
<comment type="subunit">
    <text evidence="1">Homodimer. Part of the ribosomal stalk of the 50S ribosomal subunit. Forms a multimeric L10(L12)X complex, where L10 forms an elongated spine to which 2 to 4 L12 dimers bind in a sequential fashion. Binds GTP-bound translation factors.</text>
</comment>
<comment type="similarity">
    <text evidence="1">Belongs to the bacterial ribosomal protein bL12 family.</text>
</comment>
<keyword id="KW-1185">Reference proteome</keyword>
<keyword id="KW-0687">Ribonucleoprotein</keyword>
<keyword id="KW-0689">Ribosomal protein</keyword>
<protein>
    <recommendedName>
        <fullName evidence="1">Large ribosomal subunit protein bL12</fullName>
    </recommendedName>
    <alternativeName>
        <fullName evidence="2">50S ribosomal protein L7/L12</fullName>
    </alternativeName>
</protein>
<organism>
    <name type="scientific">Nitrobacter winogradskyi (strain ATCC 25391 / DSM 10237 / CIP 104748 / NCIMB 11846 / Nb-255)</name>
    <dbReference type="NCBI Taxonomy" id="323098"/>
    <lineage>
        <taxon>Bacteria</taxon>
        <taxon>Pseudomonadati</taxon>
        <taxon>Pseudomonadota</taxon>
        <taxon>Alphaproteobacteria</taxon>
        <taxon>Hyphomicrobiales</taxon>
        <taxon>Nitrobacteraceae</taxon>
        <taxon>Nitrobacter</taxon>
    </lineage>
</organism>
<feature type="chain" id="PRO_0000243451" description="Large ribosomal subunit protein bL12">
    <location>
        <begin position="1"/>
        <end position="125"/>
    </location>
</feature>